<accession>Q56311</accession>
<organism>
    <name type="scientific">Thermotoga maritima (strain ATCC 43589 / DSM 3109 / JCM 10099 / NBRC 100826 / MSB8)</name>
    <dbReference type="NCBI Taxonomy" id="243274"/>
    <lineage>
        <taxon>Bacteria</taxon>
        <taxon>Thermotogati</taxon>
        <taxon>Thermotogota</taxon>
        <taxon>Thermotogae</taxon>
        <taxon>Thermotogales</taxon>
        <taxon>Thermotogaceae</taxon>
        <taxon>Thermotoga</taxon>
    </lineage>
</organism>
<reference key="1">
    <citation type="journal article" date="1996" name="J. Bacteriol.">
        <title>Thermostable chemotaxis proteins from the hyperthermophilic bacterium Thermotoga maritima.</title>
        <authorList>
            <person name="Swanson R.V."/>
            <person name="Sanna M.G."/>
            <person name="Simon M.I."/>
        </authorList>
    </citation>
    <scope>NUCLEOTIDE SEQUENCE [GENOMIC DNA]</scope>
</reference>
<reference key="2">
    <citation type="journal article" date="1999" name="Nature">
        <title>Evidence for lateral gene transfer between Archaea and Bacteria from genome sequence of Thermotoga maritima.</title>
        <authorList>
            <person name="Nelson K.E."/>
            <person name="Clayton R.A."/>
            <person name="Gill S.R."/>
            <person name="Gwinn M.L."/>
            <person name="Dodson R.J."/>
            <person name="Haft D.H."/>
            <person name="Hickey E.K."/>
            <person name="Peterson J.D."/>
            <person name="Nelson W.C."/>
            <person name="Ketchum K.A."/>
            <person name="McDonald L.A."/>
            <person name="Utterback T.R."/>
            <person name="Malek J.A."/>
            <person name="Linher K.D."/>
            <person name="Garrett M.M."/>
            <person name="Stewart A.M."/>
            <person name="Cotton M.D."/>
            <person name="Pratt M.S."/>
            <person name="Phillips C.A."/>
            <person name="Richardson D.L."/>
            <person name="Heidelberg J.F."/>
            <person name="Sutton G.G."/>
            <person name="Fleischmann R.D."/>
            <person name="Eisen J.A."/>
            <person name="White O."/>
            <person name="Salzberg S.L."/>
            <person name="Smith H.O."/>
            <person name="Venter J.C."/>
            <person name="Fraser C.M."/>
        </authorList>
    </citation>
    <scope>NUCLEOTIDE SEQUENCE [LARGE SCALE GENOMIC DNA]</scope>
    <source>
        <strain>ATCC 43589 / DSM 3109 / JCM 10099 / NBRC 100826 / MSB8</strain>
    </source>
</reference>
<feature type="chain" id="PRO_0000198349" description="Chemotaxis protein CheW">
    <location>
        <begin position="1"/>
        <end position="151"/>
    </location>
</feature>
<feature type="domain" description="CheW-like" evidence="2">
    <location>
        <begin position="10"/>
        <end position="147"/>
    </location>
</feature>
<feature type="strand" evidence="5">
    <location>
        <begin position="10"/>
        <end position="20"/>
    </location>
</feature>
<feature type="strand" evidence="5">
    <location>
        <begin position="22"/>
        <end position="26"/>
    </location>
</feature>
<feature type="helix" evidence="5">
    <location>
        <begin position="27"/>
        <end position="29"/>
    </location>
</feature>
<feature type="strand" evidence="5">
    <location>
        <begin position="30"/>
        <end position="35"/>
    </location>
</feature>
<feature type="strand" evidence="3">
    <location>
        <begin position="46"/>
        <end position="48"/>
    </location>
</feature>
<feature type="strand" evidence="5">
    <location>
        <begin position="49"/>
        <end position="55"/>
    </location>
</feature>
<feature type="strand" evidence="5">
    <location>
        <begin position="58"/>
        <end position="64"/>
    </location>
</feature>
<feature type="helix" evidence="5">
    <location>
        <begin position="65"/>
        <end position="69"/>
    </location>
</feature>
<feature type="helix" evidence="5">
    <location>
        <begin position="75"/>
        <end position="77"/>
    </location>
</feature>
<feature type="strand" evidence="5">
    <location>
        <begin position="80"/>
        <end position="86"/>
    </location>
</feature>
<feature type="strand" evidence="5">
    <location>
        <begin position="89"/>
        <end position="105"/>
    </location>
</feature>
<feature type="strand" evidence="5">
    <location>
        <begin position="108"/>
        <end position="110"/>
    </location>
</feature>
<feature type="turn" evidence="4">
    <location>
        <begin position="113"/>
        <end position="115"/>
    </location>
</feature>
<feature type="strand" evidence="4">
    <location>
        <begin position="116"/>
        <end position="118"/>
    </location>
</feature>
<feature type="helix" evidence="5">
    <location>
        <begin position="119"/>
        <end position="121"/>
    </location>
</feature>
<feature type="strand" evidence="5">
    <location>
        <begin position="122"/>
        <end position="128"/>
    </location>
</feature>
<feature type="strand" evidence="5">
    <location>
        <begin position="131"/>
        <end position="136"/>
    </location>
</feature>
<feature type="helix" evidence="5">
    <location>
        <begin position="138"/>
        <end position="145"/>
    </location>
</feature>
<feature type="turn" evidence="3">
    <location>
        <begin position="148"/>
        <end position="150"/>
    </location>
</feature>
<sequence>MKTLADALKEFEVLSFEIDEQALAFDVDNIEMVIEKSDITPVPKSRHFVEGVINLRGRIIPVVNLAKILGISFDEQKMKSIIVARTKDVEVGFLVDRVLGVLRITENQLDLTNVSDKFGKKSKGLVKTDGRLIIYLDIDKIIEEITVKEGV</sequence>
<dbReference type="EMBL" id="U30501">
    <property type="protein sequence ID" value="AAA96388.1"/>
    <property type="molecule type" value="Genomic_DNA"/>
</dbReference>
<dbReference type="EMBL" id="AE000512">
    <property type="protein sequence ID" value="AAD35783.1"/>
    <property type="molecule type" value="Genomic_DNA"/>
</dbReference>
<dbReference type="PIR" id="C72346">
    <property type="entry name" value="C72346"/>
</dbReference>
<dbReference type="RefSeq" id="NP_228510.1">
    <property type="nucleotide sequence ID" value="NC_000853.1"/>
</dbReference>
<dbReference type="RefSeq" id="WP_010865187.1">
    <property type="nucleotide sequence ID" value="NZ_CP011107.1"/>
</dbReference>
<dbReference type="PDB" id="1K0S">
    <property type="method" value="NMR"/>
    <property type="chains" value="A=1-151"/>
</dbReference>
<dbReference type="PDB" id="2CH4">
    <property type="method" value="X-ray"/>
    <property type="resolution" value="3.50 A"/>
    <property type="chains" value="W/Y=1-151"/>
</dbReference>
<dbReference type="PDB" id="3JA6">
    <property type="method" value="EM"/>
    <property type="resolution" value="12.70 A"/>
    <property type="chains" value="A/B/D/F=9-147"/>
</dbReference>
<dbReference type="PDB" id="3UR1">
    <property type="method" value="X-ray"/>
    <property type="resolution" value="4.50 A"/>
    <property type="chains" value="B=9-147"/>
</dbReference>
<dbReference type="PDB" id="4JPB">
    <property type="method" value="X-ray"/>
    <property type="resolution" value="3.19 A"/>
    <property type="chains" value="W=1-147"/>
</dbReference>
<dbReference type="PDBsum" id="1K0S"/>
<dbReference type="PDBsum" id="2CH4"/>
<dbReference type="PDBsum" id="3JA6"/>
<dbReference type="PDBsum" id="3UR1"/>
<dbReference type="PDBsum" id="4JPB"/>
<dbReference type="BMRB" id="Q56311"/>
<dbReference type="SMR" id="Q56311"/>
<dbReference type="DIP" id="DIP-29073N"/>
<dbReference type="IntAct" id="Q56311">
    <property type="interactions" value="1"/>
</dbReference>
<dbReference type="STRING" id="243274.TM_0701"/>
<dbReference type="PaxDb" id="243274-THEMA_01160"/>
<dbReference type="EnsemblBacteria" id="AAD35783">
    <property type="protein sequence ID" value="AAD35783"/>
    <property type="gene ID" value="TM_0701"/>
</dbReference>
<dbReference type="KEGG" id="tma:TM0701"/>
<dbReference type="KEGG" id="tmi:THEMA_01160"/>
<dbReference type="PATRIC" id="fig|243274.18.peg.226"/>
<dbReference type="eggNOG" id="COG0835">
    <property type="taxonomic scope" value="Bacteria"/>
</dbReference>
<dbReference type="InParanoid" id="Q56311"/>
<dbReference type="OrthoDB" id="9794382at2"/>
<dbReference type="EvolutionaryTrace" id="Q56311"/>
<dbReference type="Proteomes" id="UP000008183">
    <property type="component" value="Chromosome"/>
</dbReference>
<dbReference type="GO" id="GO:0005829">
    <property type="term" value="C:cytosol"/>
    <property type="evidence" value="ECO:0000318"/>
    <property type="project" value="GO_Central"/>
</dbReference>
<dbReference type="GO" id="GO:0019904">
    <property type="term" value="F:protein domain specific binding"/>
    <property type="evidence" value="ECO:0000353"/>
    <property type="project" value="CAFA"/>
</dbReference>
<dbReference type="GO" id="GO:0006935">
    <property type="term" value="P:chemotaxis"/>
    <property type="evidence" value="ECO:0000318"/>
    <property type="project" value="GO_Central"/>
</dbReference>
<dbReference type="GO" id="GO:0007165">
    <property type="term" value="P:signal transduction"/>
    <property type="evidence" value="ECO:0007669"/>
    <property type="project" value="InterPro"/>
</dbReference>
<dbReference type="CDD" id="cd00732">
    <property type="entry name" value="CheW"/>
    <property type="match status" value="1"/>
</dbReference>
<dbReference type="DisProt" id="DP00350"/>
<dbReference type="Gene3D" id="2.40.50.180">
    <property type="entry name" value="CheA-289, Domain 4"/>
    <property type="match status" value="1"/>
</dbReference>
<dbReference type="Gene3D" id="2.30.30.40">
    <property type="entry name" value="SH3 Domains"/>
    <property type="match status" value="1"/>
</dbReference>
<dbReference type="InterPro" id="IPR039315">
    <property type="entry name" value="CheW"/>
</dbReference>
<dbReference type="InterPro" id="IPR036061">
    <property type="entry name" value="CheW-like_dom_sf"/>
</dbReference>
<dbReference type="InterPro" id="IPR002545">
    <property type="entry name" value="CheW-lke_dom"/>
</dbReference>
<dbReference type="PANTHER" id="PTHR22617:SF23">
    <property type="entry name" value="CHEMOTAXIS PROTEIN CHEW"/>
    <property type="match status" value="1"/>
</dbReference>
<dbReference type="PANTHER" id="PTHR22617">
    <property type="entry name" value="CHEMOTAXIS SENSOR HISTIDINE KINASE-RELATED"/>
    <property type="match status" value="1"/>
</dbReference>
<dbReference type="Pfam" id="PF01584">
    <property type="entry name" value="CheW"/>
    <property type="match status" value="1"/>
</dbReference>
<dbReference type="SMART" id="SM00260">
    <property type="entry name" value="CheW"/>
    <property type="match status" value="1"/>
</dbReference>
<dbReference type="SUPFAM" id="SSF50341">
    <property type="entry name" value="CheW-like"/>
    <property type="match status" value="1"/>
</dbReference>
<dbReference type="PROSITE" id="PS50851">
    <property type="entry name" value="CHEW"/>
    <property type="match status" value="1"/>
</dbReference>
<evidence type="ECO:0000250" key="1"/>
<evidence type="ECO:0000255" key="2">
    <source>
        <dbReference type="PROSITE-ProRule" id="PRU00052"/>
    </source>
</evidence>
<evidence type="ECO:0007829" key="3">
    <source>
        <dbReference type="PDB" id="1K0S"/>
    </source>
</evidence>
<evidence type="ECO:0007829" key="4">
    <source>
        <dbReference type="PDB" id="2CH4"/>
    </source>
</evidence>
<evidence type="ECO:0007829" key="5">
    <source>
        <dbReference type="PDB" id="4JPB"/>
    </source>
</evidence>
<proteinExistence type="evidence at protein level"/>
<protein>
    <recommendedName>
        <fullName>Chemotaxis protein CheW</fullName>
    </recommendedName>
</protein>
<name>CHEW_THEMA</name>
<keyword id="KW-0002">3D-structure</keyword>
<keyword id="KW-0145">Chemotaxis</keyword>
<keyword id="KW-0963">Cytoplasm</keyword>
<keyword id="KW-1185">Reference proteome</keyword>
<gene>
    <name type="primary">cheW</name>
    <name type="ordered locus">TM_0701</name>
</gene>
<comment type="function">
    <text evidence="1">Involved in the transmission of sensory signals from the chemoreceptors to the flagellar motors.</text>
</comment>
<comment type="interaction">
    <interactant intactId="EBI-15580256">
        <id>Q56311</id>
    </interactant>
    <interactant intactId="EBI-1039701">
        <id>Q56310</id>
        <label>cheA</label>
    </interactant>
    <organismsDiffer>false</organismsDiffer>
    <experiments>3</experiments>
</comment>
<comment type="subcellular location">
    <subcellularLocation>
        <location evidence="1">Cytoplasm</location>
    </subcellularLocation>
</comment>